<feature type="chain" id="PRO_0000212858" description="Palmitoyltransferase ZDHHC1">
    <location>
        <begin position="1"/>
        <end position="484"/>
    </location>
</feature>
<feature type="topological domain" description="Cytoplasmic" evidence="11">
    <location>
        <begin position="1"/>
        <end position="49"/>
    </location>
</feature>
<feature type="transmembrane region" description="Helical" evidence="3">
    <location>
        <begin position="50"/>
        <end position="70"/>
    </location>
</feature>
<feature type="topological domain" description="Lumenal" evidence="11">
    <location>
        <begin position="71"/>
        <end position="74"/>
    </location>
</feature>
<feature type="transmembrane region" description="Helical" evidence="3">
    <location>
        <begin position="75"/>
        <end position="95"/>
    </location>
</feature>
<feature type="topological domain" description="Cytoplasmic" evidence="11">
    <location>
        <begin position="96"/>
        <end position="182"/>
    </location>
</feature>
<feature type="transmembrane region" description="Helical" evidence="3">
    <location>
        <begin position="183"/>
        <end position="203"/>
    </location>
</feature>
<feature type="topological domain" description="Lumenal" evidence="11">
    <location>
        <begin position="204"/>
        <end position="238"/>
    </location>
</feature>
<feature type="transmembrane region" description="Helical" evidence="3">
    <location>
        <begin position="239"/>
        <end position="259"/>
    </location>
</feature>
<feature type="topological domain" description="Cytoplasmic" evidence="11">
    <location>
        <begin position="260"/>
        <end position="484"/>
    </location>
</feature>
<feature type="domain" description="DHHC" evidence="4">
    <location>
        <begin position="131"/>
        <end position="181"/>
    </location>
</feature>
<feature type="region of interest" description="Mediates interaction with STING1" evidence="2">
    <location>
        <begin position="1"/>
        <end position="268"/>
    </location>
</feature>
<feature type="region of interest" description="Disordered" evidence="5">
    <location>
        <begin position="1"/>
        <end position="38"/>
    </location>
</feature>
<feature type="region of interest" description="Disordered" evidence="5">
    <location>
        <begin position="341"/>
        <end position="415"/>
    </location>
</feature>
<feature type="region of interest" description="Disordered" evidence="5">
    <location>
        <begin position="444"/>
        <end position="484"/>
    </location>
</feature>
<feature type="compositionally biased region" description="Polar residues" evidence="5">
    <location>
        <begin position="1"/>
        <end position="11"/>
    </location>
</feature>
<feature type="compositionally biased region" description="Polar residues" evidence="5">
    <location>
        <begin position="19"/>
        <end position="34"/>
    </location>
</feature>
<feature type="compositionally biased region" description="Basic residues" evidence="5">
    <location>
        <begin position="364"/>
        <end position="374"/>
    </location>
</feature>
<feature type="compositionally biased region" description="Basic and acidic residues" evidence="5">
    <location>
        <begin position="380"/>
        <end position="392"/>
    </location>
</feature>
<feature type="compositionally biased region" description="Low complexity" evidence="5">
    <location>
        <begin position="395"/>
        <end position="415"/>
    </location>
</feature>
<feature type="compositionally biased region" description="Gly residues" evidence="5">
    <location>
        <begin position="475"/>
        <end position="484"/>
    </location>
</feature>
<feature type="active site" description="S-palmitoyl cysteine intermediate" evidence="4">
    <location>
        <position position="161"/>
    </location>
</feature>
<sequence>MNICNKPSNKTAPEKSVWTAPSQDSGPSPELQGQRSRRNGWSWPPHPLQIVAWLLYLFFAVIGFGVLVPLLPHHWVPAGYACMGAIFAGHLVVHLTAVSIDPADANVRDKSYSGPLPIFNRSQHAHVIEDLHCNLCDVDVSARSKHCSACNKCVCGFDHHCKWLNNCVGERNYRLFLHSVASALLGVLLLVLVATYVFVEFFVNPMRLRTNQHFEVLKNHTDVWFVFLPAAPVETQAPAILALAALLILLGLLSTALLGHLLCFHIYLMWHKLTTYEYIVQHRPAQEAKETHKELESCPRKVRSIQEMEFYMRTFSHVRPEPSGQARTAALNANPSQFLATQGQVEPPLPSSSDTLALPPRIQPQKKRKRRVYRLPRSGVLDRELPLPRLRETGTPSRRSSSSSDSTSASPVHAGGSAGAYYSASAESMEEIPVAQTRLGSAALGAPGARGRESGLALQARSPAVFVSPSSGEPGTPGGGDGLP</sequence>
<name>ZDHC1_MOUSE</name>
<keyword id="KW-0012">Acyltransferase</keyword>
<keyword id="KW-0256">Endoplasmic reticulum</keyword>
<keyword id="KW-0967">Endosome</keyword>
<keyword id="KW-0333">Golgi apparatus</keyword>
<keyword id="KW-0449">Lipoprotein</keyword>
<keyword id="KW-0472">Membrane</keyword>
<keyword id="KW-0564">Palmitate</keyword>
<keyword id="KW-1185">Reference proteome</keyword>
<keyword id="KW-0808">Transferase</keyword>
<keyword id="KW-0812">Transmembrane</keyword>
<keyword id="KW-1133">Transmembrane helix</keyword>
<reference key="1">
    <citation type="journal article" date="2005" name="Science">
        <title>The transcriptional landscape of the mammalian genome.</title>
        <authorList>
            <person name="Carninci P."/>
            <person name="Kasukawa T."/>
            <person name="Katayama S."/>
            <person name="Gough J."/>
            <person name="Frith M.C."/>
            <person name="Maeda N."/>
            <person name="Oyama R."/>
            <person name="Ravasi T."/>
            <person name="Lenhard B."/>
            <person name="Wells C."/>
            <person name="Kodzius R."/>
            <person name="Shimokawa K."/>
            <person name="Bajic V.B."/>
            <person name="Brenner S.E."/>
            <person name="Batalov S."/>
            <person name="Forrest A.R."/>
            <person name="Zavolan M."/>
            <person name="Davis M.J."/>
            <person name="Wilming L.G."/>
            <person name="Aidinis V."/>
            <person name="Allen J.E."/>
            <person name="Ambesi-Impiombato A."/>
            <person name="Apweiler R."/>
            <person name="Aturaliya R.N."/>
            <person name="Bailey T.L."/>
            <person name="Bansal M."/>
            <person name="Baxter L."/>
            <person name="Beisel K.W."/>
            <person name="Bersano T."/>
            <person name="Bono H."/>
            <person name="Chalk A.M."/>
            <person name="Chiu K.P."/>
            <person name="Choudhary V."/>
            <person name="Christoffels A."/>
            <person name="Clutterbuck D.R."/>
            <person name="Crowe M.L."/>
            <person name="Dalla E."/>
            <person name="Dalrymple B.P."/>
            <person name="de Bono B."/>
            <person name="Della Gatta G."/>
            <person name="di Bernardo D."/>
            <person name="Down T."/>
            <person name="Engstrom P."/>
            <person name="Fagiolini M."/>
            <person name="Faulkner G."/>
            <person name="Fletcher C.F."/>
            <person name="Fukushima T."/>
            <person name="Furuno M."/>
            <person name="Futaki S."/>
            <person name="Gariboldi M."/>
            <person name="Georgii-Hemming P."/>
            <person name="Gingeras T.R."/>
            <person name="Gojobori T."/>
            <person name="Green R.E."/>
            <person name="Gustincich S."/>
            <person name="Harbers M."/>
            <person name="Hayashi Y."/>
            <person name="Hensch T.K."/>
            <person name="Hirokawa N."/>
            <person name="Hill D."/>
            <person name="Huminiecki L."/>
            <person name="Iacono M."/>
            <person name="Ikeo K."/>
            <person name="Iwama A."/>
            <person name="Ishikawa T."/>
            <person name="Jakt M."/>
            <person name="Kanapin A."/>
            <person name="Katoh M."/>
            <person name="Kawasawa Y."/>
            <person name="Kelso J."/>
            <person name="Kitamura H."/>
            <person name="Kitano H."/>
            <person name="Kollias G."/>
            <person name="Krishnan S.P."/>
            <person name="Kruger A."/>
            <person name="Kummerfeld S.K."/>
            <person name="Kurochkin I.V."/>
            <person name="Lareau L.F."/>
            <person name="Lazarevic D."/>
            <person name="Lipovich L."/>
            <person name="Liu J."/>
            <person name="Liuni S."/>
            <person name="McWilliam S."/>
            <person name="Madan Babu M."/>
            <person name="Madera M."/>
            <person name="Marchionni L."/>
            <person name="Matsuda H."/>
            <person name="Matsuzawa S."/>
            <person name="Miki H."/>
            <person name="Mignone F."/>
            <person name="Miyake S."/>
            <person name="Morris K."/>
            <person name="Mottagui-Tabar S."/>
            <person name="Mulder N."/>
            <person name="Nakano N."/>
            <person name="Nakauchi H."/>
            <person name="Ng P."/>
            <person name="Nilsson R."/>
            <person name="Nishiguchi S."/>
            <person name="Nishikawa S."/>
            <person name="Nori F."/>
            <person name="Ohara O."/>
            <person name="Okazaki Y."/>
            <person name="Orlando V."/>
            <person name="Pang K.C."/>
            <person name="Pavan W.J."/>
            <person name="Pavesi G."/>
            <person name="Pesole G."/>
            <person name="Petrovsky N."/>
            <person name="Piazza S."/>
            <person name="Reed J."/>
            <person name="Reid J.F."/>
            <person name="Ring B.Z."/>
            <person name="Ringwald M."/>
            <person name="Rost B."/>
            <person name="Ruan Y."/>
            <person name="Salzberg S.L."/>
            <person name="Sandelin A."/>
            <person name="Schneider C."/>
            <person name="Schoenbach C."/>
            <person name="Sekiguchi K."/>
            <person name="Semple C.A."/>
            <person name="Seno S."/>
            <person name="Sessa L."/>
            <person name="Sheng Y."/>
            <person name="Shibata Y."/>
            <person name="Shimada H."/>
            <person name="Shimada K."/>
            <person name="Silva D."/>
            <person name="Sinclair B."/>
            <person name="Sperling S."/>
            <person name="Stupka E."/>
            <person name="Sugiura K."/>
            <person name="Sultana R."/>
            <person name="Takenaka Y."/>
            <person name="Taki K."/>
            <person name="Tammoja K."/>
            <person name="Tan S.L."/>
            <person name="Tang S."/>
            <person name="Taylor M.S."/>
            <person name="Tegner J."/>
            <person name="Teichmann S.A."/>
            <person name="Ueda H.R."/>
            <person name="van Nimwegen E."/>
            <person name="Verardo R."/>
            <person name="Wei C.L."/>
            <person name="Yagi K."/>
            <person name="Yamanishi H."/>
            <person name="Zabarovsky E."/>
            <person name="Zhu S."/>
            <person name="Zimmer A."/>
            <person name="Hide W."/>
            <person name="Bult C."/>
            <person name="Grimmond S.M."/>
            <person name="Teasdale R.D."/>
            <person name="Liu E.T."/>
            <person name="Brusic V."/>
            <person name="Quackenbush J."/>
            <person name="Wahlestedt C."/>
            <person name="Mattick J.S."/>
            <person name="Hume D.A."/>
            <person name="Kai C."/>
            <person name="Sasaki D."/>
            <person name="Tomaru Y."/>
            <person name="Fukuda S."/>
            <person name="Kanamori-Katayama M."/>
            <person name="Suzuki M."/>
            <person name="Aoki J."/>
            <person name="Arakawa T."/>
            <person name="Iida J."/>
            <person name="Imamura K."/>
            <person name="Itoh M."/>
            <person name="Kato T."/>
            <person name="Kawaji H."/>
            <person name="Kawagashira N."/>
            <person name="Kawashima T."/>
            <person name="Kojima M."/>
            <person name="Kondo S."/>
            <person name="Konno H."/>
            <person name="Nakano K."/>
            <person name="Ninomiya N."/>
            <person name="Nishio T."/>
            <person name="Okada M."/>
            <person name="Plessy C."/>
            <person name="Shibata K."/>
            <person name="Shiraki T."/>
            <person name="Suzuki S."/>
            <person name="Tagami M."/>
            <person name="Waki K."/>
            <person name="Watahiki A."/>
            <person name="Okamura-Oho Y."/>
            <person name="Suzuki H."/>
            <person name="Kawai J."/>
            <person name="Hayashizaki Y."/>
        </authorList>
    </citation>
    <scope>NUCLEOTIDE SEQUENCE [LARGE SCALE MRNA]</scope>
    <source>
        <strain>C57BL/6J</strain>
        <tissue>Hypothalamus</tissue>
    </source>
</reference>
<reference key="2">
    <citation type="journal article" date="2004" name="Genome Res.">
        <title>The status, quality, and expansion of the NIH full-length cDNA project: the Mammalian Gene Collection (MGC).</title>
        <authorList>
            <consortium name="The MGC Project Team"/>
        </authorList>
    </citation>
    <scope>NUCLEOTIDE SEQUENCE [LARGE SCALE MRNA]</scope>
    <source>
        <tissue>Brain</tissue>
        <tissue>Colon</tissue>
    </source>
</reference>
<reference key="3">
    <citation type="journal article" date="1999" name="Mol. Cell. Biochem.">
        <title>The DHHC domain: a new highly conserved cysteine-rich motif.</title>
        <authorList>
            <person name="Putilina T."/>
            <person name="Wong P."/>
            <person name="Gentleman S."/>
        </authorList>
    </citation>
    <scope>TISSUE SPECIFICITY</scope>
    <source>
        <tissue>Pancreas</tissue>
    </source>
</reference>
<reference key="4">
    <citation type="journal article" date="2013" name="J. Biol. Chem.">
        <title>In silico screening for palmitoyl substrates reveals a role for DHHC1/3/10 (zDHHC1/3/11)-mediated neurochondrin palmitoylation in its targeting to Rab5-positive endosomes.</title>
        <authorList>
            <person name="Oku S."/>
            <person name="Takahashi N."/>
            <person name="Fukata Y."/>
            <person name="Fukata M."/>
        </authorList>
    </citation>
    <scope>FUNCTION</scope>
    <scope>CATALYTIC ACTIVITY</scope>
    <scope>SUBCELLULAR LOCATION</scope>
</reference>
<reference key="5">
    <citation type="journal article" date="2014" name="Cell Host Microbe">
        <title>The ER-associated protein ZDHHC1 is a positive regulator of DNA virus-triggered, MITA/STING-dependent innate immune signaling.</title>
        <authorList>
            <person name="Zhou Q."/>
            <person name="Lin H."/>
            <person name="Wang S."/>
            <person name="Wang S."/>
            <person name="Ran Y."/>
            <person name="Liu Y."/>
            <person name="Ye W."/>
            <person name="Xiong X."/>
            <person name="Zhong B."/>
            <person name="Shu H.B."/>
            <person name="Wang Y.Y."/>
        </authorList>
    </citation>
    <scope>FUNCTION</scope>
    <scope>DISRUPTION PHENOTYPE</scope>
</reference>
<reference key="6">
    <citation type="journal article" date="2024" name="Mol. Cell">
        <title>Consecutive palmitoylation and phosphorylation orchestrates NLRP3 membrane trafficking and inflammasome activation.</title>
        <authorList>
            <person name="Nie L."/>
            <person name="Fei C."/>
            <person name="Fan Y."/>
            <person name="Dang F."/>
            <person name="Zhao Z."/>
            <person name="Zhu T."/>
            <person name="Wu X."/>
            <person name="Dai T."/>
            <person name="Balasubramanian A."/>
            <person name="Pan J."/>
            <person name="Hu Y."/>
            <person name="Luo H.R."/>
            <person name="Wei W."/>
            <person name="Chen J."/>
        </authorList>
    </citation>
    <scope>FUNCTION</scope>
    <scope>CATALYTIC ACTIVITY</scope>
    <scope>DISRUPTION PHENOTYPE</scope>
</reference>
<dbReference type="EC" id="2.3.1.225" evidence="7 9"/>
<dbReference type="EMBL" id="AK038593">
    <property type="protein sequence ID" value="BAC30059.1"/>
    <property type="molecule type" value="mRNA"/>
</dbReference>
<dbReference type="EMBL" id="BC026570">
    <property type="protein sequence ID" value="AAH26570.2"/>
    <property type="molecule type" value="mRNA"/>
</dbReference>
<dbReference type="EMBL" id="BC119378">
    <property type="protein sequence ID" value="AAI19379.1"/>
    <property type="molecule type" value="mRNA"/>
</dbReference>
<dbReference type="CCDS" id="CCDS22603.1"/>
<dbReference type="RefSeq" id="NP_001365935.1">
    <property type="nucleotide sequence ID" value="NM_001379006.1"/>
</dbReference>
<dbReference type="RefSeq" id="NP_001365936.1">
    <property type="nucleotide sequence ID" value="NM_001379007.1"/>
</dbReference>
<dbReference type="RefSeq" id="NP_780369.1">
    <property type="nucleotide sequence ID" value="NM_175160.5"/>
</dbReference>
<dbReference type="RefSeq" id="XP_006531420.1">
    <property type="nucleotide sequence ID" value="XM_006531357.3"/>
</dbReference>
<dbReference type="RefSeq" id="XP_011246802.1">
    <property type="nucleotide sequence ID" value="XM_011248500.2"/>
</dbReference>
<dbReference type="RefSeq" id="XP_011246803.1">
    <property type="nucleotide sequence ID" value="XM_011248501.2"/>
</dbReference>
<dbReference type="FunCoup" id="Q8R0N9">
    <property type="interactions" value="407"/>
</dbReference>
<dbReference type="STRING" id="10090.ENSMUSP00000148381"/>
<dbReference type="GlyGen" id="Q8R0N9">
    <property type="glycosylation" value="1 site"/>
</dbReference>
<dbReference type="PhosphoSitePlus" id="Q8R0N9"/>
<dbReference type="SwissPalm" id="Q8R0N9"/>
<dbReference type="PaxDb" id="10090-ENSMUSP00000036471"/>
<dbReference type="ProteomicsDB" id="302052"/>
<dbReference type="Antibodypedia" id="56070">
    <property type="antibodies" value="137 antibodies from 21 providers"/>
</dbReference>
<dbReference type="DNASU" id="70796"/>
<dbReference type="Ensembl" id="ENSMUST00000044286.6">
    <property type="protein sequence ID" value="ENSMUSP00000036471.6"/>
    <property type="gene ID" value="ENSMUSG00000039199.7"/>
</dbReference>
<dbReference type="Ensembl" id="ENSMUST00000212303.2">
    <property type="protein sequence ID" value="ENSMUSP00000148381.2"/>
    <property type="gene ID" value="ENSMUSG00000039199.7"/>
</dbReference>
<dbReference type="GeneID" id="70796"/>
<dbReference type="KEGG" id="mmu:70796"/>
<dbReference type="UCSC" id="uc009ndd.1">
    <property type="organism name" value="mouse"/>
</dbReference>
<dbReference type="AGR" id="MGI:1918046"/>
<dbReference type="CTD" id="29800"/>
<dbReference type="MGI" id="MGI:1918046">
    <property type="gene designation" value="Zdhhc1"/>
</dbReference>
<dbReference type="VEuPathDB" id="HostDB:ENSMUSG00000039199"/>
<dbReference type="eggNOG" id="KOG1311">
    <property type="taxonomic scope" value="Eukaryota"/>
</dbReference>
<dbReference type="GeneTree" id="ENSGT00940000159191"/>
<dbReference type="HOGENOM" id="CLU_020283_0_1_1"/>
<dbReference type="InParanoid" id="Q8R0N9"/>
<dbReference type="OMA" id="FCFHIYL"/>
<dbReference type="OrthoDB" id="9909019at2759"/>
<dbReference type="PhylomeDB" id="Q8R0N9"/>
<dbReference type="TreeFam" id="TF317498"/>
<dbReference type="BioGRID-ORCS" id="70796">
    <property type="hits" value="2 hits in 80 CRISPR screens"/>
</dbReference>
<dbReference type="ChiTaRS" id="Zdhhc1">
    <property type="organism name" value="mouse"/>
</dbReference>
<dbReference type="PRO" id="PR:Q8R0N9"/>
<dbReference type="Proteomes" id="UP000000589">
    <property type="component" value="Chromosome 8"/>
</dbReference>
<dbReference type="RNAct" id="Q8R0N9">
    <property type="molecule type" value="protein"/>
</dbReference>
<dbReference type="Bgee" id="ENSMUSG00000039199">
    <property type="expression patterns" value="Expressed in superior frontal gyrus and 80 other cell types or tissues"/>
</dbReference>
<dbReference type="GO" id="GO:0005789">
    <property type="term" value="C:endoplasmic reticulum membrane"/>
    <property type="evidence" value="ECO:0007669"/>
    <property type="project" value="UniProtKB-SubCell"/>
</dbReference>
<dbReference type="GO" id="GO:0010008">
    <property type="term" value="C:endosome membrane"/>
    <property type="evidence" value="ECO:0000314"/>
    <property type="project" value="UniProtKB"/>
</dbReference>
<dbReference type="GO" id="GO:0005794">
    <property type="term" value="C:Golgi apparatus"/>
    <property type="evidence" value="ECO:0007669"/>
    <property type="project" value="UniProtKB-SubCell"/>
</dbReference>
<dbReference type="GO" id="GO:0016409">
    <property type="term" value="F:palmitoyltransferase activity"/>
    <property type="evidence" value="ECO:0000314"/>
    <property type="project" value="MGI"/>
</dbReference>
<dbReference type="GO" id="GO:0019706">
    <property type="term" value="F:protein-cysteine S-palmitoyltransferase activity"/>
    <property type="evidence" value="ECO:0000314"/>
    <property type="project" value="UniProtKB"/>
</dbReference>
<dbReference type="GO" id="GO:0140374">
    <property type="term" value="P:antiviral innate immune response"/>
    <property type="evidence" value="ECO:0000315"/>
    <property type="project" value="UniProtKB"/>
</dbReference>
<dbReference type="GO" id="GO:0018230">
    <property type="term" value="P:peptidyl-L-cysteine S-palmitoylation"/>
    <property type="evidence" value="ECO:0000314"/>
    <property type="project" value="UniProtKB"/>
</dbReference>
<dbReference type="GO" id="GO:0002230">
    <property type="term" value="P:positive regulation of defense response to virus by host"/>
    <property type="evidence" value="ECO:0000315"/>
    <property type="project" value="UniProtKB"/>
</dbReference>
<dbReference type="GO" id="GO:1900227">
    <property type="term" value="P:positive regulation of NLRP3 inflammasome complex assembly"/>
    <property type="evidence" value="ECO:0000314"/>
    <property type="project" value="UniProtKB"/>
</dbReference>
<dbReference type="GO" id="GO:1905668">
    <property type="term" value="P:positive regulation of protein localization to endosome"/>
    <property type="evidence" value="ECO:0000315"/>
    <property type="project" value="UniProtKB"/>
</dbReference>
<dbReference type="GO" id="GO:0032461">
    <property type="term" value="P:positive regulation of protein oligomerization"/>
    <property type="evidence" value="ECO:0000315"/>
    <property type="project" value="UniProtKB"/>
</dbReference>
<dbReference type="InterPro" id="IPR001594">
    <property type="entry name" value="Palmitoyltrfase_DHHC"/>
</dbReference>
<dbReference type="InterPro" id="IPR039859">
    <property type="entry name" value="PFA4/ZDH16/20/ERF2-like"/>
</dbReference>
<dbReference type="PANTHER" id="PTHR22883:SF8">
    <property type="entry name" value="PALMITOYLTRANSFERASE ZDHHC1"/>
    <property type="match status" value="1"/>
</dbReference>
<dbReference type="PANTHER" id="PTHR22883">
    <property type="entry name" value="ZINC FINGER DHHC DOMAIN CONTAINING PROTEIN"/>
    <property type="match status" value="1"/>
</dbReference>
<dbReference type="Pfam" id="PF01529">
    <property type="entry name" value="DHHC"/>
    <property type="match status" value="1"/>
</dbReference>
<dbReference type="PROSITE" id="PS50216">
    <property type="entry name" value="DHHC"/>
    <property type="match status" value="1"/>
</dbReference>
<accession>Q8R0N9</accession>
<accession>Q0VE36</accession>
<accession>Q8BJ24</accession>
<gene>
    <name evidence="10 14" type="primary">Zdhhc1</name>
</gene>
<organism>
    <name type="scientific">Mus musculus</name>
    <name type="common">Mouse</name>
    <dbReference type="NCBI Taxonomy" id="10090"/>
    <lineage>
        <taxon>Eukaryota</taxon>
        <taxon>Metazoa</taxon>
        <taxon>Chordata</taxon>
        <taxon>Craniata</taxon>
        <taxon>Vertebrata</taxon>
        <taxon>Euteleostomi</taxon>
        <taxon>Mammalia</taxon>
        <taxon>Eutheria</taxon>
        <taxon>Euarchontoglires</taxon>
        <taxon>Glires</taxon>
        <taxon>Rodentia</taxon>
        <taxon>Myomorpha</taxon>
        <taxon>Muroidea</taxon>
        <taxon>Muridae</taxon>
        <taxon>Murinae</taxon>
        <taxon>Mus</taxon>
        <taxon>Mus</taxon>
    </lineage>
</organism>
<comment type="function">
    <text evidence="7 9">Palmitoyltransferase that catalyzes the addition of palmitate onto various protein substrates, such as NCDN and NLRP3 (PubMed:23687301, PubMed:39173637). Has a palmitoyltransferase activity toward NCDN and regulates NCDN association with endosome membranes through this palmitoylation (PubMed:23687301). Acts as an activator of the NLRP3 inflammasome by mediating palmitoylation of 'Cys-130' and 'Cys-958' of NLRP3, thereby promoting NLRP3 phosphorylation and activation by NEK7 (PubMed:39173637).</text>
</comment>
<comment type="function">
    <text evidence="8">Also has a palmitoyltransferase activity-independent function in DNA virus-triggered and CGAS-mediated innate immune response (PubMed:25299331). Functions as an activator of STING1 by promoting its cGAMP-induced oligomerization and the recruitment of downstream signaling components (PubMed:25299331).</text>
</comment>
<comment type="catalytic activity">
    <reaction evidence="7 9">
        <text>L-cysteinyl-[protein] + hexadecanoyl-CoA = S-hexadecanoyl-L-cysteinyl-[protein] + CoA</text>
        <dbReference type="Rhea" id="RHEA:36683"/>
        <dbReference type="Rhea" id="RHEA-COMP:10131"/>
        <dbReference type="Rhea" id="RHEA-COMP:11032"/>
        <dbReference type="ChEBI" id="CHEBI:29950"/>
        <dbReference type="ChEBI" id="CHEBI:57287"/>
        <dbReference type="ChEBI" id="CHEBI:57379"/>
        <dbReference type="ChEBI" id="CHEBI:74151"/>
        <dbReference type="EC" id="2.3.1.225"/>
    </reaction>
    <physiologicalReaction direction="left-to-right" evidence="12 13">
        <dbReference type="Rhea" id="RHEA:36684"/>
    </physiologicalReaction>
</comment>
<comment type="subunit">
    <text evidence="2">Interacts with STING1; ZDHHC1 constitutively interacts with STING1 and in presence of DNA viruses activates it by promoting its cGAMP-induced oligomerization and the recruitment of downstream signaling components.</text>
</comment>
<comment type="subcellular location">
    <subcellularLocation>
        <location evidence="7">Endosome membrane</location>
        <topology evidence="3">Multi-pass membrane protein</topology>
    </subcellularLocation>
    <subcellularLocation>
        <location evidence="2">Endoplasmic reticulum membrane</location>
        <topology evidence="3">Multi-pass membrane protein</topology>
    </subcellularLocation>
    <subcellularLocation>
        <location evidence="2">Golgi apparatus</location>
    </subcellularLocation>
</comment>
<comment type="tissue specificity">
    <text evidence="6">Expressed at high levels in fetal lung and heart. Expressed at lower levels in fetal liver and brain. Also detected in adult islet cells of pancreas, Leydig cells of testis, retina and molecular layer of cerebellum.</text>
</comment>
<comment type="domain">
    <text evidence="1">The DHHC domain is required for palmitoyltransferase activity.</text>
</comment>
<comment type="disruption phenotype">
    <text evidence="8 9">Homozygous knockout mice are viable, fertile and do not display overt phenotype (PubMed:25299331). Composition and number of major immune cells is normal but mice are more susceptible to DNA-virus infection and death than their wild-type counterpart (PubMed:25299331). Mice show defects in LPS-induced inflammation (PubMed:39173637).</text>
</comment>
<comment type="similarity">
    <text evidence="11">Belongs to the DHHC palmitoyltransferase family.</text>
</comment>
<evidence type="ECO:0000250" key="1">
    <source>
        <dbReference type="UniProtKB" id="Q8IUH5"/>
    </source>
</evidence>
<evidence type="ECO:0000250" key="2">
    <source>
        <dbReference type="UniProtKB" id="Q8WTX9"/>
    </source>
</evidence>
<evidence type="ECO:0000255" key="3"/>
<evidence type="ECO:0000255" key="4">
    <source>
        <dbReference type="PROSITE-ProRule" id="PRU00067"/>
    </source>
</evidence>
<evidence type="ECO:0000256" key="5">
    <source>
        <dbReference type="SAM" id="MobiDB-lite"/>
    </source>
</evidence>
<evidence type="ECO:0000269" key="6">
    <source>
    </source>
</evidence>
<evidence type="ECO:0000269" key="7">
    <source>
    </source>
</evidence>
<evidence type="ECO:0000269" key="8">
    <source>
    </source>
</evidence>
<evidence type="ECO:0000269" key="9">
    <source>
    </source>
</evidence>
<evidence type="ECO:0000303" key="10">
    <source>
    </source>
</evidence>
<evidence type="ECO:0000305" key="11"/>
<evidence type="ECO:0000305" key="12">
    <source>
    </source>
</evidence>
<evidence type="ECO:0000305" key="13">
    <source>
    </source>
</evidence>
<evidence type="ECO:0000312" key="14">
    <source>
        <dbReference type="MGI" id="MGI:1918046"/>
    </source>
</evidence>
<protein>
    <recommendedName>
        <fullName evidence="11">Palmitoyltransferase ZDHHC1</fullName>
        <ecNumber evidence="7 9">2.3.1.225</ecNumber>
    </recommendedName>
    <alternativeName>
        <fullName evidence="14">Zinc finger DHHC domain-containing protein 1</fullName>
    </alternativeName>
</protein>
<proteinExistence type="evidence at protein level"/>